<organism>
    <name type="scientific">Emericella nidulans (strain FGSC A4 / ATCC 38163 / CBS 112.46 / NRRL 194 / M139)</name>
    <name type="common">Aspergillus nidulans</name>
    <dbReference type="NCBI Taxonomy" id="227321"/>
    <lineage>
        <taxon>Eukaryota</taxon>
        <taxon>Fungi</taxon>
        <taxon>Dikarya</taxon>
        <taxon>Ascomycota</taxon>
        <taxon>Pezizomycotina</taxon>
        <taxon>Eurotiomycetes</taxon>
        <taxon>Eurotiomycetidae</taxon>
        <taxon>Eurotiales</taxon>
        <taxon>Aspergillaceae</taxon>
        <taxon>Aspergillus</taxon>
        <taxon>Aspergillus subgen. Nidulantes</taxon>
    </lineage>
</organism>
<reference key="1">
    <citation type="journal article" date="2005" name="Nature">
        <title>Sequencing of Aspergillus nidulans and comparative analysis with A. fumigatus and A. oryzae.</title>
        <authorList>
            <person name="Galagan J.E."/>
            <person name="Calvo S.E."/>
            <person name="Cuomo C."/>
            <person name="Ma L.-J."/>
            <person name="Wortman J.R."/>
            <person name="Batzoglou S."/>
            <person name="Lee S.-I."/>
            <person name="Bastuerkmen M."/>
            <person name="Spevak C.C."/>
            <person name="Clutterbuck J."/>
            <person name="Kapitonov V."/>
            <person name="Jurka J."/>
            <person name="Scazzocchio C."/>
            <person name="Farman M.L."/>
            <person name="Butler J."/>
            <person name="Purcell S."/>
            <person name="Harris S."/>
            <person name="Braus G.H."/>
            <person name="Draht O."/>
            <person name="Busch S."/>
            <person name="D'Enfert C."/>
            <person name="Bouchier C."/>
            <person name="Goldman G.H."/>
            <person name="Bell-Pedersen D."/>
            <person name="Griffiths-Jones S."/>
            <person name="Doonan J.H."/>
            <person name="Yu J."/>
            <person name="Vienken K."/>
            <person name="Pain A."/>
            <person name="Freitag M."/>
            <person name="Selker E.U."/>
            <person name="Archer D.B."/>
            <person name="Penalva M.A."/>
            <person name="Oakley B.R."/>
            <person name="Momany M."/>
            <person name="Tanaka T."/>
            <person name="Kumagai T."/>
            <person name="Asai K."/>
            <person name="Machida M."/>
            <person name="Nierman W.C."/>
            <person name="Denning D.W."/>
            <person name="Caddick M.X."/>
            <person name="Hynes M."/>
            <person name="Paoletti M."/>
            <person name="Fischer R."/>
            <person name="Miller B.L."/>
            <person name="Dyer P.S."/>
            <person name="Sachs M.S."/>
            <person name="Osmani S.A."/>
            <person name="Birren B.W."/>
        </authorList>
    </citation>
    <scope>NUCLEOTIDE SEQUENCE [LARGE SCALE GENOMIC DNA]</scope>
    <source>
        <strain>FGSC A4 / ATCC 38163 / CBS 112.46 / NRRL 194 / M139</strain>
    </source>
</reference>
<reference key="2">
    <citation type="journal article" date="2009" name="Fungal Genet. Biol.">
        <title>The 2008 update of the Aspergillus nidulans genome annotation: a community effort.</title>
        <authorList>
            <person name="Wortman J.R."/>
            <person name="Gilsenan J.M."/>
            <person name="Joardar V."/>
            <person name="Deegan J."/>
            <person name="Clutterbuck J."/>
            <person name="Andersen M.R."/>
            <person name="Archer D."/>
            <person name="Bencina M."/>
            <person name="Braus G."/>
            <person name="Coutinho P."/>
            <person name="von Dohren H."/>
            <person name="Doonan J."/>
            <person name="Driessen A.J."/>
            <person name="Durek P."/>
            <person name="Espeso E."/>
            <person name="Fekete E."/>
            <person name="Flipphi M."/>
            <person name="Estrada C.G."/>
            <person name="Geysens S."/>
            <person name="Goldman G."/>
            <person name="de Groot P.W."/>
            <person name="Hansen K."/>
            <person name="Harris S.D."/>
            <person name="Heinekamp T."/>
            <person name="Helmstaedt K."/>
            <person name="Henrissat B."/>
            <person name="Hofmann G."/>
            <person name="Homan T."/>
            <person name="Horio T."/>
            <person name="Horiuchi H."/>
            <person name="James S."/>
            <person name="Jones M."/>
            <person name="Karaffa L."/>
            <person name="Karanyi Z."/>
            <person name="Kato M."/>
            <person name="Keller N."/>
            <person name="Kelly D.E."/>
            <person name="Kiel J.A."/>
            <person name="Kim J.M."/>
            <person name="van der Klei I.J."/>
            <person name="Klis F.M."/>
            <person name="Kovalchuk A."/>
            <person name="Krasevec N."/>
            <person name="Kubicek C.P."/>
            <person name="Liu B."/>
            <person name="Maccabe A."/>
            <person name="Meyer V."/>
            <person name="Mirabito P."/>
            <person name="Miskei M."/>
            <person name="Mos M."/>
            <person name="Mullins J."/>
            <person name="Nelson D.R."/>
            <person name="Nielsen J."/>
            <person name="Oakley B.R."/>
            <person name="Osmani S.A."/>
            <person name="Pakula T."/>
            <person name="Paszewski A."/>
            <person name="Paulsen I."/>
            <person name="Pilsyk S."/>
            <person name="Pocsi I."/>
            <person name="Punt P.J."/>
            <person name="Ram A.F."/>
            <person name="Ren Q."/>
            <person name="Robellet X."/>
            <person name="Robson G."/>
            <person name="Seiboth B."/>
            <person name="van Solingen P."/>
            <person name="Specht T."/>
            <person name="Sun J."/>
            <person name="Taheri-Talesh N."/>
            <person name="Takeshita N."/>
            <person name="Ussery D."/>
            <person name="vanKuyk P.A."/>
            <person name="Visser H."/>
            <person name="van de Vondervoort P.J."/>
            <person name="de Vries R.P."/>
            <person name="Walton J."/>
            <person name="Xiang X."/>
            <person name="Xiong Y."/>
            <person name="Zeng A.P."/>
            <person name="Brandt B.W."/>
            <person name="Cornell M.J."/>
            <person name="van den Hondel C.A."/>
            <person name="Visser J."/>
            <person name="Oliver S.G."/>
            <person name="Turner G."/>
        </authorList>
    </citation>
    <scope>GENOME REANNOTATION</scope>
    <source>
        <strain>FGSC A4 / ATCC 38163 / CBS 112.46 / NRRL 194 / M139</strain>
    </source>
</reference>
<name>EIF3L_EMENI</name>
<evidence type="ECO:0000255" key="1">
    <source>
        <dbReference type="HAMAP-Rule" id="MF_03011"/>
    </source>
</evidence>
<evidence type="ECO:0000255" key="2">
    <source>
        <dbReference type="PROSITE-ProRule" id="PRU01185"/>
    </source>
</evidence>
<sequence>MSYDERANAHPNLNDESDVEEEALVNDYREQVNFDDGMSELDRTTSLGAASQTQDLQAQLAAAATPLEYQATLETKFASYDNYCSLFHYILNSDGPVELEVPSYYWAWDVIDEFIYQFESFCRYRNRVARSGSNEEEAQLLRENPNTWGCYSVLNVLYSLIQKSQINEQLAAMKRGEDPAAFAGEYGSRPLYKMLGYFSIIGLLRVHCLLGDFTLALKTLDDIEMNKKAMFARVMAAHFTTYYYVGFSYMMTRRYGDAIRMFSHILVYVSRTKNFQKGGNSYDAIAKKNDQMYALIAICVALHPTRLDDTIHSALREKYGEQLHRLQQGGPEALPLFEELFRSACPKFISPTPPDFDNPALNVDPVDHHTAIFMDEVKNTLYNPTIRSYLKLYTTMDLQKLAGFLDVEPEKLRSWLLVNKQRSRQVRWVEGGLLEGETVSANDLDYALEKDLIHVSETKAGRRLVDWYLRNLARVY</sequence>
<dbReference type="EMBL" id="AACD01000101">
    <property type="protein sequence ID" value="EAA57817.1"/>
    <property type="molecule type" value="Genomic_DNA"/>
</dbReference>
<dbReference type="EMBL" id="BN001301">
    <property type="protein sequence ID" value="CBF70493.1"/>
    <property type="molecule type" value="Genomic_DNA"/>
</dbReference>
<dbReference type="RefSeq" id="XP_663558.1">
    <property type="nucleotide sequence ID" value="XM_658466.1"/>
</dbReference>
<dbReference type="SMR" id="Q5B0H6"/>
<dbReference type="STRING" id="227321.Q5B0H6"/>
<dbReference type="EnsemblFungi" id="CBF70493">
    <property type="protein sequence ID" value="CBF70493"/>
    <property type="gene ID" value="ANIA_05954"/>
</dbReference>
<dbReference type="KEGG" id="ani:ANIA_05954"/>
<dbReference type="VEuPathDB" id="FungiDB:AN5954"/>
<dbReference type="eggNOG" id="KOG3677">
    <property type="taxonomic scope" value="Eukaryota"/>
</dbReference>
<dbReference type="HOGENOM" id="CLU_029210_2_0_1"/>
<dbReference type="InParanoid" id="Q5B0H6"/>
<dbReference type="OMA" id="AGWFIRN"/>
<dbReference type="OrthoDB" id="15082at2759"/>
<dbReference type="Proteomes" id="UP000000560">
    <property type="component" value="Chromosome I"/>
</dbReference>
<dbReference type="GO" id="GO:0016282">
    <property type="term" value="C:eukaryotic 43S preinitiation complex"/>
    <property type="evidence" value="ECO:0007669"/>
    <property type="project" value="UniProtKB-UniRule"/>
</dbReference>
<dbReference type="GO" id="GO:0033290">
    <property type="term" value="C:eukaryotic 48S preinitiation complex"/>
    <property type="evidence" value="ECO:0007669"/>
    <property type="project" value="UniProtKB-UniRule"/>
</dbReference>
<dbReference type="GO" id="GO:0005852">
    <property type="term" value="C:eukaryotic translation initiation factor 3 complex"/>
    <property type="evidence" value="ECO:0000318"/>
    <property type="project" value="GO_Central"/>
</dbReference>
<dbReference type="GO" id="GO:0003743">
    <property type="term" value="F:translation initiation factor activity"/>
    <property type="evidence" value="ECO:0007669"/>
    <property type="project" value="UniProtKB-UniRule"/>
</dbReference>
<dbReference type="GO" id="GO:0001732">
    <property type="term" value="P:formation of cytoplasmic translation initiation complex"/>
    <property type="evidence" value="ECO:0007669"/>
    <property type="project" value="UniProtKB-UniRule"/>
</dbReference>
<dbReference type="GO" id="GO:0006413">
    <property type="term" value="P:translational initiation"/>
    <property type="evidence" value="ECO:0000318"/>
    <property type="project" value="GO_Central"/>
</dbReference>
<dbReference type="HAMAP" id="MF_03011">
    <property type="entry name" value="eIF3l"/>
    <property type="match status" value="1"/>
</dbReference>
<dbReference type="InterPro" id="IPR019382">
    <property type="entry name" value="eIF3l"/>
</dbReference>
<dbReference type="InterPro" id="IPR000717">
    <property type="entry name" value="PCI_dom"/>
</dbReference>
<dbReference type="PANTHER" id="PTHR13242">
    <property type="entry name" value="EUKARYOTIC TRANSLATION INITIATION FACTOR 3"/>
    <property type="match status" value="1"/>
</dbReference>
<dbReference type="PANTHER" id="PTHR13242:SF0">
    <property type="entry name" value="EUKARYOTIC TRANSLATION INITIATION FACTOR 3 SUBUNIT L"/>
    <property type="match status" value="1"/>
</dbReference>
<dbReference type="Pfam" id="PF10255">
    <property type="entry name" value="Paf67"/>
    <property type="match status" value="1"/>
</dbReference>
<dbReference type="PROSITE" id="PS50250">
    <property type="entry name" value="PCI"/>
    <property type="match status" value="1"/>
</dbReference>
<protein>
    <recommendedName>
        <fullName evidence="1">Eukaryotic translation initiation factor 3 subunit L</fullName>
        <shortName evidence="1">eIF3l</shortName>
    </recommendedName>
</protein>
<feature type="chain" id="PRO_0000364265" description="Eukaryotic translation initiation factor 3 subunit L">
    <location>
        <begin position="1"/>
        <end position="476"/>
    </location>
</feature>
<feature type="domain" description="PCI" evidence="2">
    <location>
        <begin position="257"/>
        <end position="452"/>
    </location>
</feature>
<proteinExistence type="inferred from homology"/>
<comment type="function">
    <text evidence="1">Component of the eukaryotic translation initiation factor 3 (eIF-3) complex, which is involved in protein synthesis of a specialized repertoire of mRNAs and, together with other initiation factors, stimulates binding of mRNA and methionyl-tRNAi to the 40S ribosome. The eIF-3 complex specifically targets and initiates translation of a subset of mRNAs involved in cell proliferation.</text>
</comment>
<comment type="subunit">
    <text evidence="1">Component of the eukaryotic translation initiation factor 3 (eIF-3) complex.</text>
</comment>
<comment type="subcellular location">
    <subcellularLocation>
        <location evidence="1">Cytoplasm</location>
    </subcellularLocation>
</comment>
<comment type="similarity">
    <text evidence="1">Belongs to the eIF-3 subunit L family.</text>
</comment>
<accession>Q5B0H6</accession>
<accession>C8V3G4</accession>
<keyword id="KW-0963">Cytoplasm</keyword>
<keyword id="KW-0396">Initiation factor</keyword>
<keyword id="KW-0648">Protein biosynthesis</keyword>
<keyword id="KW-1185">Reference proteome</keyword>
<gene>
    <name type="ORF">AN5954</name>
</gene>